<name>ATPB_BORA1</name>
<dbReference type="EC" id="7.1.2.2" evidence="1"/>
<dbReference type="EMBL" id="AM167904">
    <property type="protein sequence ID" value="CAJ50824.1"/>
    <property type="molecule type" value="Genomic_DNA"/>
</dbReference>
<dbReference type="RefSeq" id="WP_012418852.1">
    <property type="nucleotide sequence ID" value="NC_010645.1"/>
</dbReference>
<dbReference type="SMR" id="Q2KU36"/>
<dbReference type="STRING" id="360910.BAV3214"/>
<dbReference type="GeneID" id="92933528"/>
<dbReference type="KEGG" id="bav:BAV3214"/>
<dbReference type="eggNOG" id="COG0055">
    <property type="taxonomic scope" value="Bacteria"/>
</dbReference>
<dbReference type="HOGENOM" id="CLU_022398_0_2_4"/>
<dbReference type="OrthoDB" id="9801639at2"/>
<dbReference type="Proteomes" id="UP000001977">
    <property type="component" value="Chromosome"/>
</dbReference>
<dbReference type="GO" id="GO:0005886">
    <property type="term" value="C:plasma membrane"/>
    <property type="evidence" value="ECO:0007669"/>
    <property type="project" value="UniProtKB-SubCell"/>
</dbReference>
<dbReference type="GO" id="GO:0045259">
    <property type="term" value="C:proton-transporting ATP synthase complex"/>
    <property type="evidence" value="ECO:0007669"/>
    <property type="project" value="UniProtKB-KW"/>
</dbReference>
<dbReference type="GO" id="GO:0005524">
    <property type="term" value="F:ATP binding"/>
    <property type="evidence" value="ECO:0007669"/>
    <property type="project" value="UniProtKB-UniRule"/>
</dbReference>
<dbReference type="GO" id="GO:0016887">
    <property type="term" value="F:ATP hydrolysis activity"/>
    <property type="evidence" value="ECO:0007669"/>
    <property type="project" value="InterPro"/>
</dbReference>
<dbReference type="GO" id="GO:0046933">
    <property type="term" value="F:proton-transporting ATP synthase activity, rotational mechanism"/>
    <property type="evidence" value="ECO:0007669"/>
    <property type="project" value="UniProtKB-UniRule"/>
</dbReference>
<dbReference type="CDD" id="cd18110">
    <property type="entry name" value="ATP-synt_F1_beta_C"/>
    <property type="match status" value="1"/>
</dbReference>
<dbReference type="CDD" id="cd18115">
    <property type="entry name" value="ATP-synt_F1_beta_N"/>
    <property type="match status" value="1"/>
</dbReference>
<dbReference type="CDD" id="cd01133">
    <property type="entry name" value="F1-ATPase_beta_CD"/>
    <property type="match status" value="1"/>
</dbReference>
<dbReference type="FunFam" id="1.10.1140.10:FF:000001">
    <property type="entry name" value="ATP synthase subunit beta"/>
    <property type="match status" value="1"/>
</dbReference>
<dbReference type="FunFam" id="3.40.50.300:FF:000004">
    <property type="entry name" value="ATP synthase subunit beta"/>
    <property type="match status" value="1"/>
</dbReference>
<dbReference type="Gene3D" id="2.40.10.170">
    <property type="match status" value="1"/>
</dbReference>
<dbReference type="Gene3D" id="1.10.1140.10">
    <property type="entry name" value="Bovine Mitochondrial F1-atpase, Atp Synthase Beta Chain, Chain D, domain 3"/>
    <property type="match status" value="1"/>
</dbReference>
<dbReference type="Gene3D" id="3.40.50.300">
    <property type="entry name" value="P-loop containing nucleotide triphosphate hydrolases"/>
    <property type="match status" value="1"/>
</dbReference>
<dbReference type="HAMAP" id="MF_01347">
    <property type="entry name" value="ATP_synth_beta_bact"/>
    <property type="match status" value="1"/>
</dbReference>
<dbReference type="InterPro" id="IPR003593">
    <property type="entry name" value="AAA+_ATPase"/>
</dbReference>
<dbReference type="InterPro" id="IPR055190">
    <property type="entry name" value="ATP-synt_VA_C"/>
</dbReference>
<dbReference type="InterPro" id="IPR005722">
    <property type="entry name" value="ATP_synth_F1_bsu"/>
</dbReference>
<dbReference type="InterPro" id="IPR020003">
    <property type="entry name" value="ATPase_a/bsu_AS"/>
</dbReference>
<dbReference type="InterPro" id="IPR050053">
    <property type="entry name" value="ATPase_alpha/beta_chains"/>
</dbReference>
<dbReference type="InterPro" id="IPR004100">
    <property type="entry name" value="ATPase_F1/V1/A1_a/bsu_N"/>
</dbReference>
<dbReference type="InterPro" id="IPR036121">
    <property type="entry name" value="ATPase_F1/V1/A1_a/bsu_N_sf"/>
</dbReference>
<dbReference type="InterPro" id="IPR000194">
    <property type="entry name" value="ATPase_F1/V1/A1_a/bsu_nucl-bd"/>
</dbReference>
<dbReference type="InterPro" id="IPR024034">
    <property type="entry name" value="ATPase_F1/V1_b/a_C"/>
</dbReference>
<dbReference type="InterPro" id="IPR027417">
    <property type="entry name" value="P-loop_NTPase"/>
</dbReference>
<dbReference type="NCBIfam" id="TIGR01039">
    <property type="entry name" value="atpD"/>
    <property type="match status" value="1"/>
</dbReference>
<dbReference type="PANTHER" id="PTHR15184">
    <property type="entry name" value="ATP SYNTHASE"/>
    <property type="match status" value="1"/>
</dbReference>
<dbReference type="PANTHER" id="PTHR15184:SF71">
    <property type="entry name" value="ATP SYNTHASE SUBUNIT BETA, MITOCHONDRIAL"/>
    <property type="match status" value="1"/>
</dbReference>
<dbReference type="Pfam" id="PF00006">
    <property type="entry name" value="ATP-synt_ab"/>
    <property type="match status" value="1"/>
</dbReference>
<dbReference type="Pfam" id="PF02874">
    <property type="entry name" value="ATP-synt_ab_N"/>
    <property type="match status" value="1"/>
</dbReference>
<dbReference type="Pfam" id="PF22919">
    <property type="entry name" value="ATP-synt_VA_C"/>
    <property type="match status" value="1"/>
</dbReference>
<dbReference type="SMART" id="SM00382">
    <property type="entry name" value="AAA"/>
    <property type="match status" value="1"/>
</dbReference>
<dbReference type="SUPFAM" id="SSF47917">
    <property type="entry name" value="C-terminal domain of alpha and beta subunits of F1 ATP synthase"/>
    <property type="match status" value="1"/>
</dbReference>
<dbReference type="SUPFAM" id="SSF50615">
    <property type="entry name" value="N-terminal domain of alpha and beta subunits of F1 ATP synthase"/>
    <property type="match status" value="1"/>
</dbReference>
<dbReference type="SUPFAM" id="SSF52540">
    <property type="entry name" value="P-loop containing nucleoside triphosphate hydrolases"/>
    <property type="match status" value="1"/>
</dbReference>
<dbReference type="PROSITE" id="PS00152">
    <property type="entry name" value="ATPASE_ALPHA_BETA"/>
    <property type="match status" value="1"/>
</dbReference>
<keyword id="KW-0066">ATP synthesis</keyword>
<keyword id="KW-0067">ATP-binding</keyword>
<keyword id="KW-0997">Cell inner membrane</keyword>
<keyword id="KW-1003">Cell membrane</keyword>
<keyword id="KW-0139">CF(1)</keyword>
<keyword id="KW-0375">Hydrogen ion transport</keyword>
<keyword id="KW-0406">Ion transport</keyword>
<keyword id="KW-0472">Membrane</keyword>
<keyword id="KW-0547">Nucleotide-binding</keyword>
<keyword id="KW-1185">Reference proteome</keyword>
<keyword id="KW-1278">Translocase</keyword>
<keyword id="KW-0813">Transport</keyword>
<accession>Q2KU36</accession>
<reference key="1">
    <citation type="journal article" date="2006" name="J. Bacteriol.">
        <title>Comparison of the genome sequence of the poultry pathogen Bordetella avium with those of B. bronchiseptica, B. pertussis, and B. parapertussis reveals extensive diversity in surface structures associated with host interaction.</title>
        <authorList>
            <person name="Sebaihia M."/>
            <person name="Preston A."/>
            <person name="Maskell D.J."/>
            <person name="Kuzmiak H."/>
            <person name="Connell T.D."/>
            <person name="King N.D."/>
            <person name="Orndorff P.E."/>
            <person name="Miyamoto D.M."/>
            <person name="Thomson N.R."/>
            <person name="Harris D."/>
            <person name="Goble A."/>
            <person name="Lord A."/>
            <person name="Murphy L."/>
            <person name="Quail M.A."/>
            <person name="Rutter S."/>
            <person name="Squares R."/>
            <person name="Squares S."/>
            <person name="Woodward J."/>
            <person name="Parkhill J."/>
            <person name="Temple L.M."/>
        </authorList>
    </citation>
    <scope>NUCLEOTIDE SEQUENCE [LARGE SCALE GENOMIC DNA]</scope>
    <source>
        <strain>197N</strain>
    </source>
</reference>
<feature type="chain" id="PRO_0000254221" description="ATP synthase subunit beta">
    <location>
        <begin position="1"/>
        <end position="466"/>
    </location>
</feature>
<feature type="binding site" evidence="1">
    <location>
        <begin position="155"/>
        <end position="162"/>
    </location>
    <ligand>
        <name>ATP</name>
        <dbReference type="ChEBI" id="CHEBI:30616"/>
    </ligand>
</feature>
<sequence length="466" mass="50672">MSNGTIVQCIGAVVDIQFPRDQMPKIYEALTLADEGSSFAEQGLTFEVQQQLGDGVVRTIALGSSDGLRRGMPVSRTGAPISVPVGHGTLGRIMDVLGRPIDEAGPINADEKRAIHQHAPKFDELSPSVELLETGIKVIDLVCPFAKGGKVGLFGGAGVGKTVNMMELINNIAKQHSGLSVFAGVGERTREGNDFYHEMEESNVLDKVAMVFGQMNEPPGNRLRVALTGLTMAEKFRDEGRDILFFVDNIYRYTLAGTEVSALLGRMPSAVGYQPTLAEEMGVLQERITSTKTGSITSIQAVYVPADDLTDPSPATTFQHLDSTVVLSRDIAALGIYPAVDPLDSSSRQLDPQVVGEEHYQVARGVQQTLQRYKELRDIIAILGMDELSPEDKQAVARARKIQRFLSQPFHVAEVFTGSPGKYVPLAETIRGFKMIVEGECDALPEQAFYMVGTIDEAFEKAKKLQ</sequence>
<protein>
    <recommendedName>
        <fullName evidence="1">ATP synthase subunit beta</fullName>
        <ecNumber evidence="1">7.1.2.2</ecNumber>
    </recommendedName>
    <alternativeName>
        <fullName evidence="1">ATP synthase F1 sector subunit beta</fullName>
    </alternativeName>
    <alternativeName>
        <fullName evidence="1">F-ATPase subunit beta</fullName>
    </alternativeName>
</protein>
<gene>
    <name evidence="1" type="primary">atpD</name>
    <name type="ordered locus">BAV3214</name>
</gene>
<comment type="function">
    <text evidence="1">Produces ATP from ADP in the presence of a proton gradient across the membrane. The catalytic sites are hosted primarily by the beta subunits.</text>
</comment>
<comment type="catalytic activity">
    <reaction evidence="1">
        <text>ATP + H2O + 4 H(+)(in) = ADP + phosphate + 5 H(+)(out)</text>
        <dbReference type="Rhea" id="RHEA:57720"/>
        <dbReference type="ChEBI" id="CHEBI:15377"/>
        <dbReference type="ChEBI" id="CHEBI:15378"/>
        <dbReference type="ChEBI" id="CHEBI:30616"/>
        <dbReference type="ChEBI" id="CHEBI:43474"/>
        <dbReference type="ChEBI" id="CHEBI:456216"/>
        <dbReference type="EC" id="7.1.2.2"/>
    </reaction>
</comment>
<comment type="subunit">
    <text evidence="1">F-type ATPases have 2 components, CF(1) - the catalytic core - and CF(0) - the membrane proton channel. CF(1) has five subunits: alpha(3), beta(3), gamma(1), delta(1), epsilon(1). CF(0) has three main subunits: a(1), b(2) and c(9-12). The alpha and beta chains form an alternating ring which encloses part of the gamma chain. CF(1) is attached to CF(0) by a central stalk formed by the gamma and epsilon chains, while a peripheral stalk is formed by the delta and b chains.</text>
</comment>
<comment type="subcellular location">
    <subcellularLocation>
        <location evidence="1">Cell inner membrane</location>
        <topology evidence="1">Peripheral membrane protein</topology>
    </subcellularLocation>
</comment>
<comment type="similarity">
    <text evidence="1">Belongs to the ATPase alpha/beta chains family.</text>
</comment>
<organism>
    <name type="scientific">Bordetella avium (strain 197N)</name>
    <dbReference type="NCBI Taxonomy" id="360910"/>
    <lineage>
        <taxon>Bacteria</taxon>
        <taxon>Pseudomonadati</taxon>
        <taxon>Pseudomonadota</taxon>
        <taxon>Betaproteobacteria</taxon>
        <taxon>Burkholderiales</taxon>
        <taxon>Alcaligenaceae</taxon>
        <taxon>Bordetella</taxon>
    </lineage>
</organism>
<evidence type="ECO:0000255" key="1">
    <source>
        <dbReference type="HAMAP-Rule" id="MF_01347"/>
    </source>
</evidence>
<proteinExistence type="inferred from homology"/>